<sequence>MATIKEIKELLVTVKELESPIFLELEKDNRSGVQKEISKRKRVIQAELDENLRLESMLSYEKELYKQGLTLIAGIDEVGRGPLAGPVVAAAVILPKNCKIKGLNDSKKIPKKKHLEIFQAVQDQALSIGIGIIDNQVIDQVNIYEATKLAMQEAISQLSPQPEHLLIDAMKLDLPISQTSIIKGDANSLSIAAASIVAKVTRDELMKEYDQQFSGYDFATNAGYGTAKHLEGLTKLGVTPIHRTSFEPVKSLVLGKKES</sequence>
<evidence type="ECO:0000255" key="1">
    <source>
        <dbReference type="HAMAP-Rule" id="MF_00052"/>
    </source>
</evidence>
<evidence type="ECO:0000255" key="2">
    <source>
        <dbReference type="PROSITE-ProRule" id="PRU01319"/>
    </source>
</evidence>
<name>RNH2_STRP7</name>
<organism>
    <name type="scientific">Streptococcus pneumoniae (strain 70585)</name>
    <dbReference type="NCBI Taxonomy" id="488221"/>
    <lineage>
        <taxon>Bacteria</taxon>
        <taxon>Bacillati</taxon>
        <taxon>Bacillota</taxon>
        <taxon>Bacilli</taxon>
        <taxon>Lactobacillales</taxon>
        <taxon>Streptococcaceae</taxon>
        <taxon>Streptococcus</taxon>
    </lineage>
</organism>
<accession>C1C7C8</accession>
<proteinExistence type="inferred from homology"/>
<gene>
    <name evidence="1" type="primary">rnhB</name>
    <name type="ordered locus">SP70585_1209</name>
</gene>
<keyword id="KW-0963">Cytoplasm</keyword>
<keyword id="KW-0255">Endonuclease</keyword>
<keyword id="KW-0378">Hydrolase</keyword>
<keyword id="KW-0464">Manganese</keyword>
<keyword id="KW-0479">Metal-binding</keyword>
<keyword id="KW-0540">Nuclease</keyword>
<feature type="chain" id="PRO_1000117686" description="Ribonuclease HII">
    <location>
        <begin position="1"/>
        <end position="259"/>
    </location>
</feature>
<feature type="domain" description="RNase H type-2" evidence="2">
    <location>
        <begin position="70"/>
        <end position="258"/>
    </location>
</feature>
<feature type="binding site" evidence="1">
    <location>
        <position position="76"/>
    </location>
    <ligand>
        <name>a divalent metal cation</name>
        <dbReference type="ChEBI" id="CHEBI:60240"/>
    </ligand>
</feature>
<feature type="binding site" evidence="1">
    <location>
        <position position="77"/>
    </location>
    <ligand>
        <name>a divalent metal cation</name>
        <dbReference type="ChEBI" id="CHEBI:60240"/>
    </ligand>
</feature>
<feature type="binding site" evidence="1">
    <location>
        <position position="168"/>
    </location>
    <ligand>
        <name>a divalent metal cation</name>
        <dbReference type="ChEBI" id="CHEBI:60240"/>
    </ligand>
</feature>
<reference key="1">
    <citation type="journal article" date="2010" name="Genome Biol.">
        <title>Structure and dynamics of the pan-genome of Streptococcus pneumoniae and closely related species.</title>
        <authorList>
            <person name="Donati C."/>
            <person name="Hiller N.L."/>
            <person name="Tettelin H."/>
            <person name="Muzzi A."/>
            <person name="Croucher N.J."/>
            <person name="Angiuoli S.V."/>
            <person name="Oggioni M."/>
            <person name="Dunning Hotopp J.C."/>
            <person name="Hu F.Z."/>
            <person name="Riley D.R."/>
            <person name="Covacci A."/>
            <person name="Mitchell T.J."/>
            <person name="Bentley S.D."/>
            <person name="Kilian M."/>
            <person name="Ehrlich G.D."/>
            <person name="Rappuoli R."/>
            <person name="Moxon E.R."/>
            <person name="Masignani V."/>
        </authorList>
    </citation>
    <scope>NUCLEOTIDE SEQUENCE [LARGE SCALE GENOMIC DNA]</scope>
    <source>
        <strain>70585</strain>
    </source>
</reference>
<dbReference type="EC" id="3.1.26.4" evidence="1"/>
<dbReference type="EMBL" id="CP000918">
    <property type="protein sequence ID" value="ACO17698.1"/>
    <property type="molecule type" value="Genomic_DNA"/>
</dbReference>
<dbReference type="RefSeq" id="WP_000201145.1">
    <property type="nucleotide sequence ID" value="NC_012468.1"/>
</dbReference>
<dbReference type="SMR" id="C1C7C8"/>
<dbReference type="KEGG" id="snm:SP70585_1209"/>
<dbReference type="HOGENOM" id="CLU_036532_2_1_9"/>
<dbReference type="Proteomes" id="UP000002211">
    <property type="component" value="Chromosome"/>
</dbReference>
<dbReference type="GO" id="GO:0005737">
    <property type="term" value="C:cytoplasm"/>
    <property type="evidence" value="ECO:0007669"/>
    <property type="project" value="UniProtKB-SubCell"/>
</dbReference>
<dbReference type="GO" id="GO:0032299">
    <property type="term" value="C:ribonuclease H2 complex"/>
    <property type="evidence" value="ECO:0007669"/>
    <property type="project" value="TreeGrafter"/>
</dbReference>
<dbReference type="GO" id="GO:0030145">
    <property type="term" value="F:manganese ion binding"/>
    <property type="evidence" value="ECO:0007669"/>
    <property type="project" value="UniProtKB-UniRule"/>
</dbReference>
<dbReference type="GO" id="GO:0003723">
    <property type="term" value="F:RNA binding"/>
    <property type="evidence" value="ECO:0007669"/>
    <property type="project" value="InterPro"/>
</dbReference>
<dbReference type="GO" id="GO:0004523">
    <property type="term" value="F:RNA-DNA hybrid ribonuclease activity"/>
    <property type="evidence" value="ECO:0007669"/>
    <property type="project" value="UniProtKB-UniRule"/>
</dbReference>
<dbReference type="GO" id="GO:0043137">
    <property type="term" value="P:DNA replication, removal of RNA primer"/>
    <property type="evidence" value="ECO:0007669"/>
    <property type="project" value="TreeGrafter"/>
</dbReference>
<dbReference type="GO" id="GO:0006298">
    <property type="term" value="P:mismatch repair"/>
    <property type="evidence" value="ECO:0007669"/>
    <property type="project" value="TreeGrafter"/>
</dbReference>
<dbReference type="CDD" id="cd07182">
    <property type="entry name" value="RNase_HII_bacteria_HII_like"/>
    <property type="match status" value="1"/>
</dbReference>
<dbReference type="FunFam" id="3.30.420.10:FF:000006">
    <property type="entry name" value="Ribonuclease HII"/>
    <property type="match status" value="1"/>
</dbReference>
<dbReference type="Gene3D" id="3.30.420.10">
    <property type="entry name" value="Ribonuclease H-like superfamily/Ribonuclease H"/>
    <property type="match status" value="1"/>
</dbReference>
<dbReference type="HAMAP" id="MF_00052_B">
    <property type="entry name" value="RNase_HII_B"/>
    <property type="match status" value="1"/>
</dbReference>
<dbReference type="InterPro" id="IPR022898">
    <property type="entry name" value="RNase_HII"/>
</dbReference>
<dbReference type="InterPro" id="IPR001352">
    <property type="entry name" value="RNase_HII/HIII"/>
</dbReference>
<dbReference type="InterPro" id="IPR024567">
    <property type="entry name" value="RNase_HII/HIII_dom"/>
</dbReference>
<dbReference type="InterPro" id="IPR012337">
    <property type="entry name" value="RNaseH-like_sf"/>
</dbReference>
<dbReference type="InterPro" id="IPR036397">
    <property type="entry name" value="RNaseH_sf"/>
</dbReference>
<dbReference type="NCBIfam" id="NF000594">
    <property type="entry name" value="PRK00015.1-1"/>
    <property type="match status" value="1"/>
</dbReference>
<dbReference type="NCBIfam" id="NF000595">
    <property type="entry name" value="PRK00015.1-3"/>
    <property type="match status" value="1"/>
</dbReference>
<dbReference type="PANTHER" id="PTHR10954">
    <property type="entry name" value="RIBONUCLEASE H2 SUBUNIT A"/>
    <property type="match status" value="1"/>
</dbReference>
<dbReference type="PANTHER" id="PTHR10954:SF18">
    <property type="entry name" value="RIBONUCLEASE HII"/>
    <property type="match status" value="1"/>
</dbReference>
<dbReference type="Pfam" id="PF01351">
    <property type="entry name" value="RNase_HII"/>
    <property type="match status" value="1"/>
</dbReference>
<dbReference type="SUPFAM" id="SSF53098">
    <property type="entry name" value="Ribonuclease H-like"/>
    <property type="match status" value="1"/>
</dbReference>
<dbReference type="PROSITE" id="PS51975">
    <property type="entry name" value="RNASE_H_2"/>
    <property type="match status" value="1"/>
</dbReference>
<comment type="function">
    <text evidence="1">Endonuclease that specifically degrades the RNA of RNA-DNA hybrids.</text>
</comment>
<comment type="catalytic activity">
    <reaction evidence="1">
        <text>Endonucleolytic cleavage to 5'-phosphomonoester.</text>
        <dbReference type="EC" id="3.1.26.4"/>
    </reaction>
</comment>
<comment type="cofactor">
    <cofactor evidence="1">
        <name>Mn(2+)</name>
        <dbReference type="ChEBI" id="CHEBI:29035"/>
    </cofactor>
    <cofactor evidence="1">
        <name>Mg(2+)</name>
        <dbReference type="ChEBI" id="CHEBI:18420"/>
    </cofactor>
    <text evidence="1">Manganese or magnesium. Binds 1 divalent metal ion per monomer in the absence of substrate. May bind a second metal ion after substrate binding.</text>
</comment>
<comment type="subcellular location">
    <subcellularLocation>
        <location evidence="1">Cytoplasm</location>
    </subcellularLocation>
</comment>
<comment type="similarity">
    <text evidence="1">Belongs to the RNase HII family.</text>
</comment>
<protein>
    <recommendedName>
        <fullName evidence="1">Ribonuclease HII</fullName>
        <shortName evidence="1">RNase HII</shortName>
        <ecNumber evidence="1">3.1.26.4</ecNumber>
    </recommendedName>
</protein>